<accession>Q2G6G8</accession>
<organism>
    <name type="scientific">Novosphingobium aromaticivorans (strain ATCC 700278 / DSM 12444 / CCUG 56034 / CIP 105152 / NBRC 16084 / F199)</name>
    <dbReference type="NCBI Taxonomy" id="279238"/>
    <lineage>
        <taxon>Bacteria</taxon>
        <taxon>Pseudomonadati</taxon>
        <taxon>Pseudomonadota</taxon>
        <taxon>Alphaproteobacteria</taxon>
        <taxon>Sphingomonadales</taxon>
        <taxon>Sphingomonadaceae</taxon>
        <taxon>Novosphingobium</taxon>
    </lineage>
</organism>
<gene>
    <name evidence="1" type="primary">pth</name>
    <name type="ordered locus">Saro_2116</name>
</gene>
<reference key="1">
    <citation type="submission" date="2006-01" db="EMBL/GenBank/DDBJ databases">
        <title>Complete sequence of Novosphingobium aromaticivorans DSM 12444.</title>
        <authorList>
            <consortium name="US DOE Joint Genome Institute"/>
            <person name="Copeland A."/>
            <person name="Lucas S."/>
            <person name="Lapidus A."/>
            <person name="Barry K."/>
            <person name="Detter J.C."/>
            <person name="Glavina T."/>
            <person name="Hammon N."/>
            <person name="Israni S."/>
            <person name="Pitluck S."/>
            <person name="Chain P."/>
            <person name="Malfatti S."/>
            <person name="Shin M."/>
            <person name="Vergez L."/>
            <person name="Schmutz J."/>
            <person name="Larimer F."/>
            <person name="Land M."/>
            <person name="Kyrpides N."/>
            <person name="Ivanova N."/>
            <person name="Fredrickson J."/>
            <person name="Balkwill D."/>
            <person name="Romine M.F."/>
            <person name="Richardson P."/>
        </authorList>
    </citation>
    <scope>NUCLEOTIDE SEQUENCE [LARGE SCALE GENOMIC DNA]</scope>
    <source>
        <strain>ATCC 700278 / DSM 12444 / CCUG 56034 / CIP 105152 / NBRC 16084 / F199</strain>
    </source>
</reference>
<keyword id="KW-0963">Cytoplasm</keyword>
<keyword id="KW-0378">Hydrolase</keyword>
<keyword id="KW-1185">Reference proteome</keyword>
<keyword id="KW-0694">RNA-binding</keyword>
<keyword id="KW-0820">tRNA-binding</keyword>
<evidence type="ECO:0000255" key="1">
    <source>
        <dbReference type="HAMAP-Rule" id="MF_00083"/>
    </source>
</evidence>
<dbReference type="EC" id="3.1.1.29" evidence="1"/>
<dbReference type="EMBL" id="CP000248">
    <property type="protein sequence ID" value="ABD26555.1"/>
    <property type="molecule type" value="Genomic_DNA"/>
</dbReference>
<dbReference type="RefSeq" id="WP_011445764.1">
    <property type="nucleotide sequence ID" value="NC_007794.1"/>
</dbReference>
<dbReference type="SMR" id="Q2G6G8"/>
<dbReference type="STRING" id="279238.Saro_2116"/>
<dbReference type="KEGG" id="nar:Saro_2116"/>
<dbReference type="eggNOG" id="COG0193">
    <property type="taxonomic scope" value="Bacteria"/>
</dbReference>
<dbReference type="HOGENOM" id="CLU_062456_1_0_5"/>
<dbReference type="Proteomes" id="UP000009134">
    <property type="component" value="Chromosome"/>
</dbReference>
<dbReference type="GO" id="GO:0005737">
    <property type="term" value="C:cytoplasm"/>
    <property type="evidence" value="ECO:0007669"/>
    <property type="project" value="UniProtKB-SubCell"/>
</dbReference>
<dbReference type="GO" id="GO:0004045">
    <property type="term" value="F:peptidyl-tRNA hydrolase activity"/>
    <property type="evidence" value="ECO:0007669"/>
    <property type="project" value="UniProtKB-UniRule"/>
</dbReference>
<dbReference type="GO" id="GO:0000049">
    <property type="term" value="F:tRNA binding"/>
    <property type="evidence" value="ECO:0007669"/>
    <property type="project" value="UniProtKB-UniRule"/>
</dbReference>
<dbReference type="GO" id="GO:0006515">
    <property type="term" value="P:protein quality control for misfolded or incompletely synthesized proteins"/>
    <property type="evidence" value="ECO:0007669"/>
    <property type="project" value="UniProtKB-UniRule"/>
</dbReference>
<dbReference type="GO" id="GO:0072344">
    <property type="term" value="P:rescue of stalled ribosome"/>
    <property type="evidence" value="ECO:0007669"/>
    <property type="project" value="UniProtKB-UniRule"/>
</dbReference>
<dbReference type="CDD" id="cd00462">
    <property type="entry name" value="PTH"/>
    <property type="match status" value="1"/>
</dbReference>
<dbReference type="FunFam" id="3.40.50.1470:FF:000001">
    <property type="entry name" value="Peptidyl-tRNA hydrolase"/>
    <property type="match status" value="1"/>
</dbReference>
<dbReference type="Gene3D" id="3.40.50.1470">
    <property type="entry name" value="Peptidyl-tRNA hydrolase"/>
    <property type="match status" value="1"/>
</dbReference>
<dbReference type="HAMAP" id="MF_00083">
    <property type="entry name" value="Pept_tRNA_hydro_bact"/>
    <property type="match status" value="1"/>
</dbReference>
<dbReference type="InterPro" id="IPR001328">
    <property type="entry name" value="Pept_tRNA_hydro"/>
</dbReference>
<dbReference type="InterPro" id="IPR018171">
    <property type="entry name" value="Pept_tRNA_hydro_CS"/>
</dbReference>
<dbReference type="InterPro" id="IPR036416">
    <property type="entry name" value="Pept_tRNA_hydro_sf"/>
</dbReference>
<dbReference type="NCBIfam" id="TIGR00447">
    <property type="entry name" value="pth"/>
    <property type="match status" value="1"/>
</dbReference>
<dbReference type="PANTHER" id="PTHR17224">
    <property type="entry name" value="PEPTIDYL-TRNA HYDROLASE"/>
    <property type="match status" value="1"/>
</dbReference>
<dbReference type="PANTHER" id="PTHR17224:SF1">
    <property type="entry name" value="PEPTIDYL-TRNA HYDROLASE"/>
    <property type="match status" value="1"/>
</dbReference>
<dbReference type="Pfam" id="PF01195">
    <property type="entry name" value="Pept_tRNA_hydro"/>
    <property type="match status" value="1"/>
</dbReference>
<dbReference type="SUPFAM" id="SSF53178">
    <property type="entry name" value="Peptidyl-tRNA hydrolase-like"/>
    <property type="match status" value="1"/>
</dbReference>
<dbReference type="PROSITE" id="PS01196">
    <property type="entry name" value="PEPT_TRNA_HYDROL_2"/>
    <property type="match status" value="1"/>
</dbReference>
<protein>
    <recommendedName>
        <fullName evidence="1">Peptidyl-tRNA hydrolase</fullName>
        <shortName evidence="1">Pth</shortName>
        <ecNumber evidence="1">3.1.1.29</ecNumber>
    </recommendedName>
</protein>
<name>PTH_NOVAD</name>
<comment type="function">
    <text evidence="1">Hydrolyzes ribosome-free peptidyl-tRNAs (with 1 or more amino acids incorporated), which drop off the ribosome during protein synthesis, or as a result of ribosome stalling.</text>
</comment>
<comment type="function">
    <text evidence="1">Catalyzes the release of premature peptidyl moieties from peptidyl-tRNA molecules trapped in stalled 50S ribosomal subunits, and thus maintains levels of free tRNAs and 50S ribosomes.</text>
</comment>
<comment type="catalytic activity">
    <reaction evidence="1">
        <text>an N-acyl-L-alpha-aminoacyl-tRNA + H2O = an N-acyl-L-amino acid + a tRNA + H(+)</text>
        <dbReference type="Rhea" id="RHEA:54448"/>
        <dbReference type="Rhea" id="RHEA-COMP:10123"/>
        <dbReference type="Rhea" id="RHEA-COMP:13883"/>
        <dbReference type="ChEBI" id="CHEBI:15377"/>
        <dbReference type="ChEBI" id="CHEBI:15378"/>
        <dbReference type="ChEBI" id="CHEBI:59874"/>
        <dbReference type="ChEBI" id="CHEBI:78442"/>
        <dbReference type="ChEBI" id="CHEBI:138191"/>
        <dbReference type="EC" id="3.1.1.29"/>
    </reaction>
</comment>
<comment type="subunit">
    <text evidence="1">Monomer.</text>
</comment>
<comment type="subcellular location">
    <subcellularLocation>
        <location evidence="1">Cytoplasm</location>
    </subcellularLocation>
</comment>
<comment type="similarity">
    <text evidence="1">Belongs to the PTH family.</text>
</comment>
<proteinExistence type="inferred from homology"/>
<sequence length="191" mass="20818">MQLWVGLGNPGPQYALHRHNVGFMALDTIAEVHNFGPVQKKFQGWLQEGRIGTEKVLLLKPATFMNESGRSVGEAMRFYKLGMDALVVFHDELDLAPFKVKVKQGGGTAGHNGLRSIDKHLGPDFLRVRLGIGHPGHKDRVTGHVLGNFAKSEQDDLVDMLGAIASEAALLAKGDNVLFMNNIALRQQTAG</sequence>
<feature type="chain" id="PRO_0000264070" description="Peptidyl-tRNA hydrolase">
    <location>
        <begin position="1"/>
        <end position="191"/>
    </location>
</feature>
<feature type="active site" description="Proton acceptor" evidence="1">
    <location>
        <position position="19"/>
    </location>
</feature>
<feature type="binding site" evidence="1">
    <location>
        <position position="14"/>
    </location>
    <ligand>
        <name>tRNA</name>
        <dbReference type="ChEBI" id="CHEBI:17843"/>
    </ligand>
</feature>
<feature type="binding site" evidence="1">
    <location>
        <position position="64"/>
    </location>
    <ligand>
        <name>tRNA</name>
        <dbReference type="ChEBI" id="CHEBI:17843"/>
    </ligand>
</feature>
<feature type="binding site" evidence="1">
    <location>
        <position position="66"/>
    </location>
    <ligand>
        <name>tRNA</name>
        <dbReference type="ChEBI" id="CHEBI:17843"/>
    </ligand>
</feature>
<feature type="binding site" evidence="1">
    <location>
        <position position="112"/>
    </location>
    <ligand>
        <name>tRNA</name>
        <dbReference type="ChEBI" id="CHEBI:17843"/>
    </ligand>
</feature>
<feature type="site" description="Discriminates between blocked and unblocked aminoacyl-tRNA" evidence="1">
    <location>
        <position position="9"/>
    </location>
</feature>
<feature type="site" description="Stabilizes the basic form of H active site to accept a proton" evidence="1">
    <location>
        <position position="91"/>
    </location>
</feature>